<comment type="function">
    <text evidence="3">Part of the ABC transporter complex CntABCDF (Opp1) involved in the uptake of metal in complex with the metallophore staphylopine (StP). May be involved in the import of a large array of divalent metals ions such as nickel, cobalt, zinc, copper and iron. Probably responsible for the translocation of the substrate across the membrane.</text>
</comment>
<comment type="subunit">
    <text evidence="6">The complex is composed of two ATP-binding proteins (CntD and CntF), two transmembrane proteins (CntB and CntC) and a solute-binding protein (CntA).</text>
</comment>
<comment type="subcellular location">
    <subcellularLocation>
        <location evidence="5">Cell membrane</location>
        <topology evidence="1">Multi-pass membrane protein</topology>
    </subcellularLocation>
</comment>
<comment type="induction">
    <text evidence="3">Up-regulated in metal-poor media.</text>
</comment>
<comment type="disruption phenotype">
    <text evidence="3">Deletion of the cntABCDF genes decreases StP intracellular levels and decreases the import of iron, zinc, nickel and cobalt.</text>
</comment>
<comment type="similarity">
    <text evidence="5">Belongs to the binding-protein-dependent transport system permease family.</text>
</comment>
<feature type="chain" id="PRO_0000447272" description="Metal-staphylopine import system permease protein CntB">
    <location>
        <begin position="1"/>
        <end position="311"/>
    </location>
</feature>
<feature type="transmembrane region" description="Helical" evidence="1">
    <location>
        <begin position="9"/>
        <end position="29"/>
    </location>
</feature>
<feature type="transmembrane region" description="Helical" evidence="1">
    <location>
        <begin position="105"/>
        <end position="125"/>
    </location>
</feature>
<feature type="transmembrane region" description="Helical" evidence="1">
    <location>
        <begin position="139"/>
        <end position="159"/>
    </location>
</feature>
<feature type="transmembrane region" description="Helical" evidence="1">
    <location>
        <begin position="173"/>
        <end position="193"/>
    </location>
</feature>
<feature type="transmembrane region" description="Helical" evidence="1">
    <location>
        <begin position="237"/>
        <end position="257"/>
    </location>
</feature>
<feature type="transmembrane region" description="Helical" evidence="1">
    <location>
        <begin position="274"/>
        <end position="294"/>
    </location>
</feature>
<feature type="domain" description="ABC transmembrane type-1" evidence="2">
    <location>
        <begin position="99"/>
        <end position="295"/>
    </location>
</feature>
<name>CNTB_STAAM</name>
<sequence length="311" mass="34749">MFKFILKRIALMFPLVIVVSFMTFLLTYITNENPAVTILHAQGTPNVTPELIAETNEKYGFNDPLLIQYKNWLLEAMQFNFGTSYITGDPVAERIGPAFMNTLKLTIISSVMVMITSIILGVVSALKRGKFTDRAIRSVAFFLTALPSYWIASILIIYVSVKLNILPTSGLTGPESYILPVIVITIAYAGIYFRNVRRSMVEQLNEDYVLYLRASGVKSITLMLHVLRNAIQVAVSIFCMSIPMIMGGLVVIEYIFAWPGLGQLSLKAILEHDFPVIQAYVLIVAVLFIVFNTLADIINALLNPRLREGAR</sequence>
<dbReference type="EMBL" id="BA000017">
    <property type="protein sequence ID" value="BAB58628.1"/>
    <property type="molecule type" value="Genomic_DNA"/>
</dbReference>
<dbReference type="SMR" id="A0A0H3K104"/>
<dbReference type="KEGG" id="sav:SAV2466"/>
<dbReference type="HOGENOM" id="CLU_036879_0_2_9"/>
<dbReference type="PhylomeDB" id="A0A0H3K104"/>
<dbReference type="Proteomes" id="UP000002481">
    <property type="component" value="Chromosome"/>
</dbReference>
<dbReference type="GO" id="GO:0005886">
    <property type="term" value="C:plasma membrane"/>
    <property type="evidence" value="ECO:0007669"/>
    <property type="project" value="UniProtKB-SubCell"/>
</dbReference>
<dbReference type="GO" id="GO:0006824">
    <property type="term" value="P:cobalt ion transport"/>
    <property type="evidence" value="ECO:0007669"/>
    <property type="project" value="UniProtKB-KW"/>
</dbReference>
<dbReference type="GO" id="GO:0006825">
    <property type="term" value="P:copper ion transport"/>
    <property type="evidence" value="ECO:0007669"/>
    <property type="project" value="UniProtKB-KW"/>
</dbReference>
<dbReference type="GO" id="GO:0006826">
    <property type="term" value="P:iron ion transport"/>
    <property type="evidence" value="ECO:0007669"/>
    <property type="project" value="UniProtKB-KW"/>
</dbReference>
<dbReference type="GO" id="GO:0015675">
    <property type="term" value="P:nickel cation transport"/>
    <property type="evidence" value="ECO:0007669"/>
    <property type="project" value="UniProtKB-KW"/>
</dbReference>
<dbReference type="GO" id="GO:0006829">
    <property type="term" value="P:zinc ion transport"/>
    <property type="evidence" value="ECO:0007669"/>
    <property type="project" value="UniProtKB-KW"/>
</dbReference>
<dbReference type="CDD" id="cd06261">
    <property type="entry name" value="TM_PBP2"/>
    <property type="match status" value="1"/>
</dbReference>
<dbReference type="Gene3D" id="1.10.3720.10">
    <property type="entry name" value="MetI-like"/>
    <property type="match status" value="1"/>
</dbReference>
<dbReference type="InterPro" id="IPR045621">
    <property type="entry name" value="BPD_transp_1_N"/>
</dbReference>
<dbReference type="InterPro" id="IPR050036">
    <property type="entry name" value="CntB"/>
</dbReference>
<dbReference type="InterPro" id="IPR000515">
    <property type="entry name" value="MetI-like"/>
</dbReference>
<dbReference type="InterPro" id="IPR035906">
    <property type="entry name" value="MetI-like_sf"/>
</dbReference>
<dbReference type="NCBIfam" id="NF045469">
    <property type="entry name" value="Opp1B"/>
    <property type="match status" value="1"/>
</dbReference>
<dbReference type="PANTHER" id="PTHR43163">
    <property type="entry name" value="DIPEPTIDE TRANSPORT SYSTEM PERMEASE PROTEIN DPPB-RELATED"/>
    <property type="match status" value="1"/>
</dbReference>
<dbReference type="PANTHER" id="PTHR43163:SF6">
    <property type="entry name" value="DIPEPTIDE TRANSPORT SYSTEM PERMEASE PROTEIN DPPB-RELATED"/>
    <property type="match status" value="1"/>
</dbReference>
<dbReference type="Pfam" id="PF00528">
    <property type="entry name" value="BPD_transp_1"/>
    <property type="match status" value="1"/>
</dbReference>
<dbReference type="Pfam" id="PF19300">
    <property type="entry name" value="BPD_transp_1_N"/>
    <property type="match status" value="1"/>
</dbReference>
<dbReference type="SUPFAM" id="SSF161098">
    <property type="entry name" value="MetI-like"/>
    <property type="match status" value="1"/>
</dbReference>
<dbReference type="PROSITE" id="PS50928">
    <property type="entry name" value="ABC_TM1"/>
    <property type="match status" value="1"/>
</dbReference>
<accession>A0A0H3K104</accession>
<protein>
    <recommendedName>
        <fullName evidence="5">Metal-staphylopine import system permease protein CntB</fullName>
    </recommendedName>
</protein>
<keyword id="KW-1003">Cell membrane</keyword>
<keyword id="KW-0170">Cobalt</keyword>
<keyword id="KW-0171">Cobalt transport</keyword>
<keyword id="KW-0186">Copper</keyword>
<keyword id="KW-0187">Copper transport</keyword>
<keyword id="KW-0406">Ion transport</keyword>
<keyword id="KW-0408">Iron</keyword>
<keyword id="KW-0410">Iron transport</keyword>
<keyword id="KW-0472">Membrane</keyword>
<keyword id="KW-0533">Nickel</keyword>
<keyword id="KW-0921">Nickel transport</keyword>
<keyword id="KW-0812">Transmembrane</keyword>
<keyword id="KW-1133">Transmembrane helix</keyword>
<keyword id="KW-0813">Transport</keyword>
<keyword id="KW-0862">Zinc</keyword>
<keyword id="KW-0864">Zinc transport</keyword>
<gene>
    <name evidence="4" type="primary">cntB</name>
    <name evidence="7" type="ordered locus">SAV2466</name>
</gene>
<reference key="1">
    <citation type="journal article" date="2001" name="Lancet">
        <title>Whole genome sequencing of meticillin-resistant Staphylococcus aureus.</title>
        <authorList>
            <person name="Kuroda M."/>
            <person name="Ohta T."/>
            <person name="Uchiyama I."/>
            <person name="Baba T."/>
            <person name="Yuzawa H."/>
            <person name="Kobayashi I."/>
            <person name="Cui L."/>
            <person name="Oguchi A."/>
            <person name="Aoki K."/>
            <person name="Nagai Y."/>
            <person name="Lian J.-Q."/>
            <person name="Ito T."/>
            <person name="Kanamori M."/>
            <person name="Matsumaru H."/>
            <person name="Maruyama A."/>
            <person name="Murakami H."/>
            <person name="Hosoyama A."/>
            <person name="Mizutani-Ui Y."/>
            <person name="Takahashi N.K."/>
            <person name="Sawano T."/>
            <person name="Inoue R."/>
            <person name="Kaito C."/>
            <person name="Sekimizu K."/>
            <person name="Hirakawa H."/>
            <person name="Kuhara S."/>
            <person name="Goto S."/>
            <person name="Yabuzaki J."/>
            <person name="Kanehisa M."/>
            <person name="Yamashita A."/>
            <person name="Oshima K."/>
            <person name="Furuya K."/>
            <person name="Yoshino C."/>
            <person name="Shiba T."/>
            <person name="Hattori M."/>
            <person name="Ogasawara N."/>
            <person name="Hayashi H."/>
            <person name="Hiramatsu K."/>
        </authorList>
    </citation>
    <scope>NUCLEOTIDE SEQUENCE [LARGE SCALE GENOMIC DNA]</scope>
    <source>
        <strain>Mu50 / ATCC 700699</strain>
    </source>
</reference>
<reference key="2">
    <citation type="journal article" date="2016" name="Science">
        <title>Biosynthesis of a broad-spectrum nicotianamine-like metallophore in Staphylococcus aureus.</title>
        <authorList>
            <person name="Ghssein G."/>
            <person name="Brutesco C."/>
            <person name="Ouerdane L."/>
            <person name="Fojcik C."/>
            <person name="Izaute A."/>
            <person name="Wang S."/>
            <person name="Hajjar C."/>
            <person name="Lobinski R."/>
            <person name="Lemaire D."/>
            <person name="Richaud P."/>
            <person name="Voulhoux R."/>
            <person name="Espaillat A."/>
            <person name="Cava F."/>
            <person name="Pignol D."/>
            <person name="Borezee-Durant E."/>
            <person name="Arnoux P."/>
        </authorList>
    </citation>
    <scope>FUNCTION</scope>
    <scope>SUBUNIT</scope>
    <scope>INDUCTION</scope>
    <scope>DISRUPTION PHENOTYPE</scope>
    <source>
        <strain>Mu50 / ATCC 700699</strain>
    </source>
</reference>
<organism>
    <name type="scientific">Staphylococcus aureus (strain Mu50 / ATCC 700699)</name>
    <dbReference type="NCBI Taxonomy" id="158878"/>
    <lineage>
        <taxon>Bacteria</taxon>
        <taxon>Bacillati</taxon>
        <taxon>Bacillota</taxon>
        <taxon>Bacilli</taxon>
        <taxon>Bacillales</taxon>
        <taxon>Staphylococcaceae</taxon>
        <taxon>Staphylococcus</taxon>
    </lineage>
</organism>
<proteinExistence type="evidence at protein level"/>
<evidence type="ECO:0000255" key="1"/>
<evidence type="ECO:0000255" key="2">
    <source>
        <dbReference type="PROSITE-ProRule" id="PRU00441"/>
    </source>
</evidence>
<evidence type="ECO:0000269" key="3">
    <source>
    </source>
</evidence>
<evidence type="ECO:0000303" key="4">
    <source>
    </source>
</evidence>
<evidence type="ECO:0000305" key="5"/>
<evidence type="ECO:0000305" key="6">
    <source>
    </source>
</evidence>
<evidence type="ECO:0000312" key="7">
    <source>
        <dbReference type="EMBL" id="BAB58628.1"/>
    </source>
</evidence>